<gene>
    <name evidence="21" type="primary">ROP18</name>
    <name evidence="32" type="ORF">TGRH88_034260</name>
</gene>
<keyword id="KW-0002">3D-structure</keyword>
<keyword id="KW-0067">ATP-binding</keyword>
<keyword id="KW-0968">Cytoplasmic vesicle</keyword>
<keyword id="KW-1015">Disulfide bond</keyword>
<keyword id="KW-0325">Glycoprotein</keyword>
<keyword id="KW-0418">Kinase</keyword>
<keyword id="KW-0472">Membrane</keyword>
<keyword id="KW-0479">Metal-binding</keyword>
<keyword id="KW-0547">Nucleotide-binding</keyword>
<keyword id="KW-1185">Reference proteome</keyword>
<keyword id="KW-0808">Transferase</keyword>
<keyword id="KW-0812">Transmembrane</keyword>
<keyword id="KW-1133">Transmembrane helix</keyword>
<keyword id="KW-0843">Virulence</keyword>
<organism evidence="31">
    <name type="scientific">Toxoplasma gondii</name>
    <dbReference type="NCBI Taxonomy" id="5811"/>
    <lineage>
        <taxon>Eukaryota</taxon>
        <taxon>Sar</taxon>
        <taxon>Alveolata</taxon>
        <taxon>Apicomplexa</taxon>
        <taxon>Conoidasida</taxon>
        <taxon>Coccidia</taxon>
        <taxon>Eucoccidiorida</taxon>
        <taxon>Eimeriorina</taxon>
        <taxon>Sarcocystidae</taxon>
        <taxon>Toxoplasma</taxon>
    </lineage>
</organism>
<dbReference type="EC" id="2.7.11.1" evidence="5 6 10 18"/>
<dbReference type="EMBL" id="JAAUHK010000193">
    <property type="protein sequence ID" value="KAF4642700.1"/>
    <property type="molecule type" value="Genomic_DNA"/>
</dbReference>
<dbReference type="EMBL" id="AM075204">
    <property type="protein sequence ID" value="CAJ27113.1"/>
    <property type="molecule type" value="Genomic_DNA"/>
</dbReference>
<dbReference type="EMBL" id="JX045324">
    <property type="protein sequence ID" value="AFO54811.1"/>
    <property type="molecule type" value="Genomic_DNA"/>
</dbReference>
<dbReference type="EMBL" id="JX045325">
    <property type="protein sequence ID" value="AFO54812.1"/>
    <property type="molecule type" value="Genomic_DNA"/>
</dbReference>
<dbReference type="EMBL" id="JX045326">
    <property type="protein sequence ID" value="AFO54813.1"/>
    <property type="molecule type" value="Genomic_DNA"/>
</dbReference>
<dbReference type="EMBL" id="JX045327">
    <property type="protein sequence ID" value="AFO54814.1"/>
    <property type="molecule type" value="Genomic_DNA"/>
</dbReference>
<dbReference type="EMBL" id="JX045328">
    <property type="protein sequence ID" value="AFO54815.1"/>
    <property type="molecule type" value="Genomic_DNA"/>
</dbReference>
<dbReference type="EMBL" id="JX045329">
    <property type="protein sequence ID" value="AFO54816.1"/>
    <property type="molecule type" value="Genomic_DNA"/>
</dbReference>
<dbReference type="EMBL" id="JX045330">
    <property type="protein sequence ID" value="AFO54817.1"/>
    <property type="molecule type" value="Genomic_DNA"/>
</dbReference>
<dbReference type="EMBL" id="JX045331">
    <property type="protein sequence ID" value="AFO54818.1"/>
    <property type="molecule type" value="Genomic_DNA"/>
</dbReference>
<dbReference type="EMBL" id="JX045332">
    <property type="protein sequence ID" value="AFO54819.1"/>
    <property type="molecule type" value="Genomic_DNA"/>
</dbReference>
<dbReference type="EMBL" id="JX045333">
    <property type="protein sequence ID" value="AFO54820.1"/>
    <property type="molecule type" value="Genomic_DNA"/>
</dbReference>
<dbReference type="PDB" id="4JRN">
    <property type="method" value="X-ray"/>
    <property type="resolution" value="2.71 A"/>
    <property type="chains" value="A=187-554"/>
</dbReference>
<dbReference type="PDBsum" id="4JRN"/>
<dbReference type="SMR" id="Q2PAY2"/>
<dbReference type="VEuPathDB" id="ToxoDB:TGARI_258800"/>
<dbReference type="VEuPathDB" id="ToxoDB:TGCAST_205250"/>
<dbReference type="VEuPathDB" id="ToxoDB:TGCOUG_258800"/>
<dbReference type="VEuPathDB" id="ToxoDB:TGDOM2_258800"/>
<dbReference type="VEuPathDB" id="ToxoDB:TGFOU_205250"/>
<dbReference type="VEuPathDB" id="ToxoDB:TGGT1_205250"/>
<dbReference type="VEuPathDB" id="ToxoDB:TGMAS_205250"/>
<dbReference type="VEuPathDB" id="ToxoDB:TGME49_252360"/>
<dbReference type="VEuPathDB" id="ToxoDB:TGP89_258800"/>
<dbReference type="VEuPathDB" id="ToxoDB:TGPRC2_258800"/>
<dbReference type="VEuPathDB" id="ToxoDB:TGRH88_034260"/>
<dbReference type="VEuPathDB" id="ToxoDB:TGRUB_205250"/>
<dbReference type="VEuPathDB" id="ToxoDB:TGVAND_205250"/>
<dbReference type="VEuPathDB" id="ToxoDB:TGVEG_258800"/>
<dbReference type="EvolutionaryTrace" id="Q2PAY2"/>
<dbReference type="PHI-base" id="PHI:10798"/>
<dbReference type="PHI-base" id="PHI:11486"/>
<dbReference type="PHI-base" id="PHI:9330"/>
<dbReference type="Proteomes" id="UP000557509">
    <property type="component" value="Unassembled WGS sequence"/>
</dbReference>
<dbReference type="GO" id="GO:0005634">
    <property type="term" value="C:nucleus"/>
    <property type="evidence" value="ECO:0007669"/>
    <property type="project" value="TreeGrafter"/>
</dbReference>
<dbReference type="GO" id="GO:0005524">
    <property type="term" value="F:ATP binding"/>
    <property type="evidence" value="ECO:0007669"/>
    <property type="project" value="UniProtKB-UniRule"/>
</dbReference>
<dbReference type="GO" id="GO:0046872">
    <property type="term" value="F:metal ion binding"/>
    <property type="evidence" value="ECO:0007669"/>
    <property type="project" value="UniProtKB-KW"/>
</dbReference>
<dbReference type="GO" id="GO:0004674">
    <property type="term" value="F:protein serine/threonine kinase activity"/>
    <property type="evidence" value="ECO:0007669"/>
    <property type="project" value="TreeGrafter"/>
</dbReference>
<dbReference type="GO" id="GO:0044773">
    <property type="term" value="P:mitotic DNA damage checkpoint signaling"/>
    <property type="evidence" value="ECO:0007669"/>
    <property type="project" value="TreeGrafter"/>
</dbReference>
<dbReference type="Gene3D" id="3.30.200.20">
    <property type="entry name" value="Phosphorylase Kinase, domain 1"/>
    <property type="match status" value="1"/>
</dbReference>
<dbReference type="Gene3D" id="1.10.510.10">
    <property type="entry name" value="Transferase(Phosphotransferase) domain 1"/>
    <property type="match status" value="1"/>
</dbReference>
<dbReference type="InterPro" id="IPR027916">
    <property type="entry name" value="Kinase-like_dom_Apicomplexa"/>
</dbReference>
<dbReference type="InterPro" id="IPR011009">
    <property type="entry name" value="Kinase-like_dom_sf"/>
</dbReference>
<dbReference type="InterPro" id="IPR000719">
    <property type="entry name" value="Prot_kinase_dom"/>
</dbReference>
<dbReference type="InterPro" id="IPR017441">
    <property type="entry name" value="Protein_kinase_ATP_BS"/>
</dbReference>
<dbReference type="InterPro" id="IPR008271">
    <property type="entry name" value="Ser/Thr_kinase_AS"/>
</dbReference>
<dbReference type="PANTHER" id="PTHR44167">
    <property type="entry name" value="OVARIAN-SPECIFIC SERINE/THREONINE-PROTEIN KINASE LOK-RELATED"/>
    <property type="match status" value="1"/>
</dbReference>
<dbReference type="PANTHER" id="PTHR44167:SF30">
    <property type="entry name" value="PHOSPHORYLASE KINASE"/>
    <property type="match status" value="1"/>
</dbReference>
<dbReference type="Pfam" id="PF14531">
    <property type="entry name" value="Kinase-like"/>
    <property type="match status" value="1"/>
</dbReference>
<dbReference type="SMART" id="SM00220">
    <property type="entry name" value="S_TKc"/>
    <property type="match status" value="1"/>
</dbReference>
<dbReference type="SUPFAM" id="SSF56112">
    <property type="entry name" value="Protein kinase-like (PK-like)"/>
    <property type="match status" value="1"/>
</dbReference>
<dbReference type="PROSITE" id="PS00107">
    <property type="entry name" value="PROTEIN_KINASE_ATP"/>
    <property type="match status" value="1"/>
</dbReference>
<dbReference type="PROSITE" id="PS50011">
    <property type="entry name" value="PROTEIN_KINASE_DOM"/>
    <property type="match status" value="1"/>
</dbReference>
<dbReference type="PROSITE" id="PS00108">
    <property type="entry name" value="PROTEIN_KINASE_ST"/>
    <property type="match status" value="1"/>
</dbReference>
<comment type="function">
    <text evidence="4 5 6 7 8 9 10 11 12 13 14 17 18 20">Protein kinase (Probable) (PubMed:24129568). Virulence factor (PubMed:19266027, PubMed:21147463, PubMed:24832449, PubMed:26247512, PubMed:26699401). Mediates parasite survival in mouse macrophages and monocytes (PubMed:21147463, PubMed:23144612). Reduces the accumulation of mouse IRGA6 (IIGP1) and IRGB6 (TGTP1/TGTP2), immunity-related GTPases (IRGs) that protect mice from infection by certain intracellular pathogens, on the parasitophorous vacuole and IRG-mediated killing of parasites by mouse cells; probably in connection with ROP5 (PubMed:21147463, PubMed:22761577, PubMed:22802726). In complex with GRA7, targets IRGs to prevent IRG-mediated parasite killing by mouse cells (PubMed:24390541). Phosphorylates mouse IRGA6 (IIGP1); its activity toward mouse IRGA6 is promoted by GRA7 or ROP5 (Probable) (PubMed:21147463, PubMed:21203588). Phosphorylates mouse IRGB6 (TGTP1/TGTP2) (PubMed:21147463, PubMed:23144612). Phosphorylates mouse IRGB10 (GM12250) (PubMed:21147463). Does not affect IFN-gamma (IFNG)-mediated parasite killing in human cells that do not possess the large variety of IRGs (PubMed:22761577).</text>
</comment>
<comment type="catalytic activity">
    <reaction evidence="5 6 10 18">
        <text>L-threonyl-[protein] + ATP = O-phospho-L-threonyl-[protein] + ADP + H(+)</text>
        <dbReference type="Rhea" id="RHEA:46608"/>
        <dbReference type="Rhea" id="RHEA-COMP:11060"/>
        <dbReference type="Rhea" id="RHEA-COMP:11605"/>
        <dbReference type="ChEBI" id="CHEBI:15378"/>
        <dbReference type="ChEBI" id="CHEBI:30013"/>
        <dbReference type="ChEBI" id="CHEBI:30616"/>
        <dbReference type="ChEBI" id="CHEBI:61977"/>
        <dbReference type="ChEBI" id="CHEBI:456216"/>
        <dbReference type="EC" id="2.7.11.1"/>
    </reaction>
</comment>
<comment type="catalytic activity">
    <reaction evidence="18">
        <text>L-seryl-[protein] + ATP = O-phospho-L-seryl-[protein] + ADP + H(+)</text>
        <dbReference type="Rhea" id="RHEA:17989"/>
        <dbReference type="Rhea" id="RHEA-COMP:9863"/>
        <dbReference type="Rhea" id="RHEA-COMP:11604"/>
        <dbReference type="ChEBI" id="CHEBI:15378"/>
        <dbReference type="ChEBI" id="CHEBI:29999"/>
        <dbReference type="ChEBI" id="CHEBI:30616"/>
        <dbReference type="ChEBI" id="CHEBI:83421"/>
        <dbReference type="ChEBI" id="CHEBI:456216"/>
        <dbReference type="EC" id="2.7.11.1"/>
    </reaction>
</comment>
<comment type="activity regulation">
    <text evidence="9">Kinase activity is enhanced by polymorphic pseudokinase ROP5.</text>
</comment>
<comment type="subunit">
    <text evidence="5 11 12 13">Component of a complex at least composed of ROP18, GRA7 and ROP2 (PubMed:24390541). Component of a complex at least composed of ROP18 and ROP5 (PubMed:24832449, PubMed:26247512). Interacts with GRA7 in the absence of ROP5 (PubMed:26247512). Interacts with mouse IRGB6 (TGTP1/TGTP2) (PubMed:21147463).</text>
</comment>
<comment type="subcellular location">
    <subcellularLocation>
        <location evidence="9 11">Parasitophorous vacuole membrane</location>
        <topology evidence="1">Single-pass membrane protein</topology>
    </subcellularLocation>
    <subcellularLocation>
        <location evidence="4 11">Cytoplasmic vesicle</location>
        <location evidence="4 11">Secretory vesicle</location>
        <location evidence="4 11">Rhoptry</location>
    </subcellularLocation>
</comment>
<comment type="domain">
    <text evidence="10">An additional potential ligand-binding pocket outside of the active site cleft is proposed; however, a physiological ligand for this pocket is not known.</text>
</comment>
<comment type="polymorphism">
    <text evidence="4 7 14">The three major alleles, termed I*, II* and III*, are described (PubMed:19266027). The I* allele is further subdivided into alleles I*a, I*b and I*c (PubMed:19266027). Expression differences and allelic diversity between three alleles of ROP18 account for much of the variation in acute mouse virulence among natural isolates (PubMed:19266027). The avirulent type III* allele is the most ancient (PubMed:19266027). Intermediate-virulent (type II*) and highly virulent (type I*) lineages show evidence of strong selective pressure (PubMed:19266027). The allele types are highly predictive of virulence in mice (PubMed:22761577, PubMed:26699401).</text>
</comment>
<comment type="disruption phenotype">
    <text evidence="5 8 9 11 12 13">Gene knockout results in reduced virulence in mice (PubMed:21147463, PubMed:24390541, PubMed:26247512). Significantly reduced virulence in mice in double knockout with GRA7 (PubMed:24390541). Significantly reduced virulence in double knockout with ROP17 (PubMed:24832449). Faster clearance of parasites from IFN-gamma (IFNG)-activated mouse macrophages and monocytes (PubMed:21147463, PubMed:23144612, PubMed:24390541). Increased recruitment of immunity-related GTPases (IRGs) to the parasitophorous vacuole membrane (PubMed:21147463, PubMed:22802726).</text>
</comment>
<comment type="similarity">
    <text evidence="2">Belongs to the protein kinase superfamily. Ser/Thr protein kinase family.</text>
</comment>
<comment type="caution">
    <text evidence="7 8 9 12 13">ROP18 and ROP5 are identified as components of the rhoptry kinase complex (PubMed:24832449, PubMed:26247512). However, some studies fail to confirm such an interaction between ROP18 and ROP5 (PubMed:22761577, PubMed:23144612). Additionally, two reports indicate that ROP5 modulates kinase activity of ROP18 (PubMed:22802726, PubMed:23144612). Another study, however, suggests that ROP5 is not necessary for ROP18 kinase activity (PubMed:22761577).</text>
</comment>
<sequence length="554" mass="62342">MFSVQRPPLTRTVVRMGLATLLPKTACLAGLNVALVFLLFQVQDGTGITLGPSKLDSKPTSLDSQQHVADKRWLATVGHYKHLAGATESTRDVSLLEERAQHRVNAQETNQRRTIFQRLLNLLRRRERDGEVSGSAADSSSRPRLSVRQRLAQLWRRAKSLFKRGIRRYFPQGRNRQRSLRAQRRRSELVFEKADSGCVIGKRILAHMQEQIGQPQALENSERLDRILTVAAWPPDVPKRFVSVTTGETRTLVRGAPLGSGGFATVYEATDVETNEELAVKVFMSEKEPTDETMLDLQRESSCYRNFSLAKTAKDAQESCRFMVPSDVVMLEGQPASTEVVIGLTTRWVPNYFLLMMRAEADMSKVISWVFGDASVNKSEFGLVVRMYLSSQAIKLVANVQAQGIVHTDIKPANFLLLKDGRLFLGDFGTYRINNSVGRAIGTPGYEPPERPFQATGITYTFPTDAWQLGITLYCIWCKERPTPADGIWDYLHFADCPSTPELVQDLIRSLLNRDPQKRMLPLQALETAAFKEMDSVVKGAAQNFEQQEHLHTE</sequence>
<evidence type="ECO:0000255" key="1"/>
<evidence type="ECO:0000255" key="2">
    <source>
        <dbReference type="PROSITE-ProRule" id="PRU00159"/>
    </source>
</evidence>
<evidence type="ECO:0000255" key="3">
    <source>
        <dbReference type="PROSITE-ProRule" id="PRU00498"/>
    </source>
</evidence>
<evidence type="ECO:0000269" key="4">
    <source>
    </source>
</evidence>
<evidence type="ECO:0000269" key="5">
    <source>
    </source>
</evidence>
<evidence type="ECO:0000269" key="6">
    <source>
    </source>
</evidence>
<evidence type="ECO:0000269" key="7">
    <source>
    </source>
</evidence>
<evidence type="ECO:0000269" key="8">
    <source>
    </source>
</evidence>
<evidence type="ECO:0000269" key="9">
    <source>
    </source>
</evidence>
<evidence type="ECO:0000269" key="10">
    <source>
    </source>
</evidence>
<evidence type="ECO:0000269" key="11">
    <source>
    </source>
</evidence>
<evidence type="ECO:0000269" key="12">
    <source>
    </source>
</evidence>
<evidence type="ECO:0000269" key="13">
    <source>
    </source>
</evidence>
<evidence type="ECO:0000269" key="14">
    <source>
    </source>
</evidence>
<evidence type="ECO:0000303" key="15">
    <source>
    </source>
</evidence>
<evidence type="ECO:0000305" key="16"/>
<evidence type="ECO:0000305" key="17">
    <source>
    </source>
</evidence>
<evidence type="ECO:0000305" key="18">
    <source>
    </source>
</evidence>
<evidence type="ECO:0000305" key="19">
    <source>
    </source>
</evidence>
<evidence type="ECO:0000305" key="20">
    <source>
    </source>
</evidence>
<evidence type="ECO:0000312" key="21">
    <source>
        <dbReference type="EMBL" id="AFO54811.1"/>
    </source>
</evidence>
<evidence type="ECO:0000312" key="22">
    <source>
        <dbReference type="EMBL" id="AFO54812.1"/>
    </source>
</evidence>
<evidence type="ECO:0000312" key="23">
    <source>
        <dbReference type="EMBL" id="AFO54813.1"/>
    </source>
</evidence>
<evidence type="ECO:0000312" key="24">
    <source>
        <dbReference type="EMBL" id="AFO54814.1"/>
    </source>
</evidence>
<evidence type="ECO:0000312" key="25">
    <source>
        <dbReference type="EMBL" id="AFO54815.1"/>
    </source>
</evidence>
<evidence type="ECO:0000312" key="26">
    <source>
        <dbReference type="EMBL" id="AFO54816.1"/>
    </source>
</evidence>
<evidence type="ECO:0000312" key="27">
    <source>
        <dbReference type="EMBL" id="AFO54817.1"/>
    </source>
</evidence>
<evidence type="ECO:0000312" key="28">
    <source>
        <dbReference type="EMBL" id="AFO54818.1"/>
    </source>
</evidence>
<evidence type="ECO:0000312" key="29">
    <source>
        <dbReference type="EMBL" id="AFO54819.1"/>
    </source>
</evidence>
<evidence type="ECO:0000312" key="30">
    <source>
        <dbReference type="EMBL" id="AFO54820.1"/>
    </source>
</evidence>
<evidence type="ECO:0000312" key="31">
    <source>
        <dbReference type="EMBL" id="CAJ27113.1"/>
    </source>
</evidence>
<evidence type="ECO:0000312" key="32">
    <source>
        <dbReference type="EMBL" id="KAF4642700.1"/>
    </source>
</evidence>
<evidence type="ECO:0000312" key="33">
    <source>
        <dbReference type="Proteomes" id="UP000557509"/>
    </source>
</evidence>
<evidence type="ECO:0007744" key="34">
    <source>
        <dbReference type="PDB" id="4JRN"/>
    </source>
</evidence>
<protein>
    <recommendedName>
        <fullName evidence="15">Serine/threonine-protein kinase ROP18</fullName>
        <ecNumber evidence="5 6 10 18">2.7.11.1</ecNumber>
    </recommendedName>
    <alternativeName>
        <fullName evidence="21">Rhoptry kinase family protein</fullName>
    </alternativeName>
    <alternativeName>
        <fullName evidence="31">Rhoptry protein 18</fullName>
    </alternativeName>
    <alternativeName>
        <fullName evidence="32">Rhoptry protein ROP18</fullName>
    </alternativeName>
</protein>
<reference evidence="21" key="1">
    <citation type="journal article" date="2009" name="PLoS Genet.">
        <title>Selection at a single locus leads to widespread expansion of Toxoplasma gondii lineages that are virulent in mice.</title>
        <authorList>
            <person name="Khan A."/>
            <person name="Taylor S."/>
            <person name="Ajioka J.W."/>
            <person name="Rosenthal B.M."/>
            <person name="Sibley L.D."/>
        </authorList>
    </citation>
    <scope>NUCLEOTIDE SEQUENCE [GENOMIC DNA]</scope>
    <scope>FUNCTION</scope>
    <scope>SUBCELLULAR LOCATION</scope>
    <scope>POLYMORPHISM</scope>
    <source>
        <strain evidence="29">ATCC 50869 / FOU</strain>
        <strain evidence="28">BOF</strain>
        <strain evidence="25">ENT</strain>
        <strain evidence="26">GT1</strain>
        <strain evidence="23">MOR</strain>
        <strain evidence="22">NED</strain>
        <strain evidence="21">OH3</strain>
        <strain evidence="27">RH</strain>
        <strain evidence="30">TgCatBr2</strain>
        <strain evidence="24">VEL</strain>
    </source>
</reference>
<reference evidence="31" key="2">
    <citation type="submission" date="2005-08" db="EMBL/GenBank/DDBJ databases">
        <title>The rop2 family of toxoplasma gondii rhoptry proteins: proteomic and genomic characterization.</title>
        <authorList>
            <person name="El Hajj H."/>
            <person name="Demey E."/>
            <person name="Poncet J."/>
            <person name="Lebrun M."/>
            <person name="Galeotti N."/>
            <person name="Fourmaux M.N."/>
            <person name="Vial H."/>
            <person name="Dubremetz J.F."/>
        </authorList>
    </citation>
    <scope>NUCLEOTIDE SEQUENCE [LARGE SCALE GENOMIC DNA]</scope>
    <source>
        <strain evidence="31">RH</strain>
    </source>
</reference>
<reference evidence="33" key="3">
    <citation type="submission" date="2020-03" db="EMBL/GenBank/DDBJ databases">
        <title>Genome sequence of Toxoplasma gondii RH-88 strain.</title>
        <authorList>
            <person name="Lorenzi H.A."/>
            <person name="Venepally P."/>
            <person name="Rozenberg A."/>
            <person name="Sibley D."/>
        </authorList>
    </citation>
    <scope>NUCLEOTIDE SEQUENCE [LARGE SCALE GENOMIC DNA]</scope>
    <source>
        <strain evidence="33">RH-88</strain>
    </source>
</reference>
<reference evidence="16" key="4">
    <citation type="journal article" date="2010" name="Cell Host Microbe">
        <title>Phosphorylation of immunity-related GTPases by a Toxoplasma gondii-secreted kinase promotes macrophage survival and virulence.</title>
        <authorList>
            <person name="Fentress S.J."/>
            <person name="Behnke M.S."/>
            <person name="Dunay I.R."/>
            <person name="Mashayekhi M."/>
            <person name="Rommereim L.M."/>
            <person name="Fox B.A."/>
            <person name="Bzik D.J."/>
            <person name="Taylor G.A."/>
            <person name="Turk B.E."/>
            <person name="Lichti C.F."/>
            <person name="Townsend R.R."/>
            <person name="Qiu W."/>
            <person name="Hui R."/>
            <person name="Beatty W.L."/>
            <person name="Sibley L.D."/>
        </authorList>
    </citation>
    <scope>FUNCTION</scope>
    <scope>CATALYTIC ACTIVITY</scope>
    <scope>INTERACTION WITH MOUSE IRGB6 (TGTP1/TGTP2)</scope>
    <scope>DISRUPTION PHENOTYPE</scope>
    <scope>MUTAGENESIS OF ASP-409</scope>
</reference>
<reference evidence="16" key="5">
    <citation type="journal article" date="2010" name="PLoS Biol.">
        <title>Phosphorylation of mouse immunity-related GTPase (IRG) resistance proteins is an evasion strategy for virulent Toxoplasma gondii.</title>
        <authorList>
            <person name="Steinfeldt T."/>
            <person name="Koenen-Waisman S."/>
            <person name="Tong L."/>
            <person name="Pawlowski N."/>
            <person name="Lamkemeyer T."/>
            <person name="Sibley L.D."/>
            <person name="Hunn J.P."/>
            <person name="Howard J.C."/>
        </authorList>
    </citation>
    <scope>FUNCTION</scope>
    <scope>CATALYTIC ACTIVITY</scope>
    <scope>MUTAGENESIS OF ASP-409</scope>
</reference>
<reference evidence="16" key="6">
    <citation type="journal article" date="2015" name="PLoS Biol.">
        <authorList>
            <person name="Steinfeldt T."/>
            <person name="Koenen-Waisman S."/>
            <person name="Tong L."/>
            <person name="Pawlowski N."/>
            <person name="Lamkemeyer T."/>
            <person name="Sibley L.D."/>
            <person name="Hunn J.P."/>
            <person name="Howard J.C."/>
        </authorList>
    </citation>
    <scope>ERRATUM OF PUBMED:21203588</scope>
</reference>
<reference evidence="16" key="7">
    <citation type="journal article" date="2012" name="PLoS Biol.">
        <title>A Toxoplasma gondii pseudokinase inhibits host IRG resistance proteins.</title>
        <authorList>
            <person name="Fleckenstein M.C."/>
            <person name="Reese M.L."/>
            <person name="Koenen-Waisman S."/>
            <person name="Boothroyd J.C."/>
            <person name="Howard J.C."/>
            <person name="Steinfeldt T."/>
        </authorList>
    </citation>
    <scope>FUNCTION</scope>
    <scope>DISRUPTION PHENOTYPE</scope>
</reference>
<reference evidence="16" key="8">
    <citation type="journal article" date="2012" name="PLoS Pathog.">
        <title>The rhoptry proteins ROP18 and ROP5 mediate Toxoplasma gondii evasion of the murine, but not the human, interferon-gamma response.</title>
        <authorList>
            <person name="Niedelman W."/>
            <person name="Gold D.A."/>
            <person name="Rosowski E.E."/>
            <person name="Sprokholt J.K."/>
            <person name="Lim D."/>
            <person name="Farid Arenas A."/>
            <person name="Melo M.B."/>
            <person name="Spooner E."/>
            <person name="Yaffe M.B."/>
            <person name="Saeij J.P."/>
        </authorList>
    </citation>
    <scope>FUNCTION</scope>
    <scope>POLYMORPHISM</scope>
</reference>
<reference evidence="16" key="9">
    <citation type="journal article" date="2012" name="PLoS Pathog.">
        <title>The polymorphic pseudokinase ROP5 controls virulence in Toxoplasma gondii by regulating the active kinase ROP18.</title>
        <authorList>
            <person name="Behnke M.S."/>
            <person name="Fentress S.J."/>
            <person name="Mashayekhi M."/>
            <person name="Li L.X."/>
            <person name="Taylor G.A."/>
            <person name="Sibley L.D."/>
        </authorList>
    </citation>
    <scope>FUNCTION</scope>
    <scope>CATALYTIC ACTIVITY</scope>
    <scope>ACTIVITY REGULATION</scope>
    <scope>SUBCELLULAR LOCATION</scope>
    <scope>DISRUPTION PHENOTYPE</scope>
</reference>
<reference evidence="16" key="10">
    <citation type="journal article" date="2014" name="Cell Host Microbe">
        <title>The Toxoplasma pseudokinase ROP5 forms complexes with ROP18 and ROP17 kinases that synergize to control acute virulence in mice.</title>
        <authorList>
            <person name="Etheridge R.D."/>
            <person name="Alaganan A."/>
            <person name="Tang K."/>
            <person name="Lou H.J."/>
            <person name="Turk B.E."/>
            <person name="Sibley L.D."/>
        </authorList>
    </citation>
    <scope>IDENTIFICATION BY MASS SPECTROMETRY</scope>
    <scope>FUNCTION</scope>
    <scope>INTERACTION WITH ROP5</scope>
    <scope>DISRUPTION PHENOTYPE</scope>
</reference>
<reference evidence="16" key="11">
    <citation type="journal article" date="2014" name="Proc. Natl. Acad. Sci. U.S.A.">
        <title>Toxoplasma GRA7 effector increases turnover of immunity-related GTPases and contributes to acute virulence in the mouse.</title>
        <authorList>
            <person name="Alaganan A."/>
            <person name="Fentress S.J."/>
            <person name="Tang K."/>
            <person name="Wang Q."/>
            <person name="Sibley L.D."/>
        </authorList>
    </citation>
    <scope>IDENTIFICATION BY MASS SPECTROMETRY</scope>
    <scope>FUNCTION</scope>
    <scope>SUBUNIT</scope>
    <scope>SUBCELLULAR LOCATION</scope>
    <scope>DISRUPTION PHENOTYPE</scope>
</reference>
<reference evidence="16" key="12">
    <citation type="journal article" date="2016" name="Cell. Microbiol.">
        <title>The Toxoplasma gondii rhoptry protein ROP18 is an Irga6-specific kinase and regulated by the dense granule protein GRA7.</title>
        <authorList>
            <person name="Hermanns T."/>
            <person name="Mueller U.B."/>
            <person name="Koenen-Waisman S."/>
            <person name="Howard J.C."/>
            <person name="Steinfeldt T."/>
        </authorList>
    </citation>
    <scope>IDENTIFICATION BY MASS SPECTROMETRY</scope>
    <scope>FUNCTION</scope>
    <scope>INTERACTION WITH ROP5 AND GRA7</scope>
    <scope>DISRUPTION PHENOTYPE</scope>
</reference>
<reference evidence="16" key="13">
    <citation type="journal article" date="2016" name="Int. J. Parasitol.">
        <title>The ROP18 and ROP5 gene allele types are highly predictive of virulence in mice across globally distributed strains of Toxoplasma gondii.</title>
        <authorList>
            <person name="Shwab E.K."/>
            <person name="Jiang T."/>
            <person name="Pena H.F."/>
            <person name="Gennari S.M."/>
            <person name="Dubey J.P."/>
            <person name="Su C."/>
        </authorList>
    </citation>
    <scope>FUNCTION</scope>
    <scope>POLYMORPHISM</scope>
</reference>
<reference evidence="34" key="14">
    <citation type="journal article" date="2013" name="J. Biol. Chem.">
        <title>Structure of the Toxoplasma gondii ROP18 kinase domain reveals a second ligand binding pocket required for acute virulence.</title>
        <authorList>
            <person name="Lim D."/>
            <person name="Gold D.A."/>
            <person name="Julien L."/>
            <person name="Rosowski E.E."/>
            <person name="Niedelman W."/>
            <person name="Yaffe M.B."/>
            <person name="Saeij J.P."/>
        </authorList>
    </citation>
    <scope>X-RAY CRYSTALLOGRAPHY (2.71 ANGSTROMS) OF 187-554 IN COMPLEX WITH ATP ANALOG AND MAGNESIUM ION</scope>
    <scope>FUNCTION</scope>
    <scope>CATALYTIC ACTIVITY</scope>
    <scope>DOMAIN</scope>
    <scope>DISULFIDE BOND</scope>
    <scope>MUTAGENESIS OF ASP-409</scope>
</reference>
<feature type="chain" id="PRO_0000462479" description="Serine/threonine-protein kinase ROP18">
    <location>
        <begin position="1"/>
        <end position="554"/>
    </location>
</feature>
<feature type="transmembrane region" description="Helical" evidence="1">
    <location>
        <begin position="17"/>
        <end position="40"/>
    </location>
</feature>
<feature type="domain" description="Protein kinase" evidence="2">
    <location>
        <begin position="252"/>
        <end position="531"/>
    </location>
</feature>
<feature type="active site" description="Proton acceptor" evidence="2">
    <location>
        <position position="409"/>
    </location>
</feature>
<feature type="binding site" evidence="19 34">
    <location>
        <position position="262"/>
    </location>
    <ligand>
        <name>ATP</name>
        <dbReference type="ChEBI" id="CHEBI:30616"/>
    </ligand>
</feature>
<feature type="binding site" evidence="19 34">
    <location>
        <position position="264"/>
    </location>
    <ligand>
        <name>ATP</name>
        <dbReference type="ChEBI" id="CHEBI:30616"/>
    </ligand>
</feature>
<feature type="binding site" evidence="19 34">
    <location>
        <position position="281"/>
    </location>
    <ligand>
        <name>ATP</name>
        <dbReference type="ChEBI" id="CHEBI:30616"/>
    </ligand>
</feature>
<feature type="binding site" evidence="19 34">
    <location>
        <position position="357"/>
    </location>
    <ligand>
        <name>ATP</name>
        <dbReference type="ChEBI" id="CHEBI:30616"/>
    </ligand>
</feature>
<feature type="binding site" evidence="19 34">
    <location>
        <position position="359"/>
    </location>
    <ligand>
        <name>ATP</name>
        <dbReference type="ChEBI" id="CHEBI:30616"/>
    </ligand>
</feature>
<feature type="binding site" evidence="19 34">
    <location>
        <position position="362"/>
    </location>
    <ligand>
        <name>ATP</name>
        <dbReference type="ChEBI" id="CHEBI:30616"/>
    </ligand>
</feature>
<feature type="binding site" evidence="10 34">
    <location>
        <position position="427"/>
    </location>
    <ligand>
        <name>ATP</name>
        <dbReference type="ChEBI" id="CHEBI:30616"/>
    </ligand>
</feature>
<feature type="binding site" evidence="10 34">
    <location>
        <position position="427"/>
    </location>
    <ligand>
        <name>Mg(2+)</name>
        <dbReference type="ChEBI" id="CHEBI:18420"/>
    </ligand>
</feature>
<feature type="glycosylation site" description="N-linked (GlcNAc...) asparagine" evidence="3">
    <location>
        <position position="306"/>
    </location>
</feature>
<feature type="glycosylation site" description="N-linked (GlcNAc...) asparagine" evidence="3">
    <location>
        <position position="377"/>
    </location>
</feature>
<feature type="glycosylation site" description="N-linked (GlcNAc...) asparagine" evidence="3">
    <location>
        <position position="434"/>
    </location>
</feature>
<feature type="disulfide bond" evidence="10 34">
    <location>
        <begin position="478"/>
        <end position="497"/>
    </location>
</feature>
<feature type="mutagenesis site" description="Kinase-dead mutant. Reduces virulence in mice. Promotes interacton with mouse IRGB6 (TGTP1/TGTP2)." evidence="5 6 10">
    <original>D</original>
    <variation>N</variation>
    <location>
        <position position="409"/>
    </location>
</feature>
<accession>Q2PAY2</accession>
<accession>B9Q063</accession>
<accession>S7W304</accession>
<name>ROP18_TOXGO</name>
<proteinExistence type="evidence at protein level"/>